<comment type="subcellular location">
    <subcellularLocation>
        <location evidence="2">Membrane</location>
        <topology evidence="2">Single-pass membrane protein</topology>
    </subcellularLocation>
</comment>
<protein>
    <recommendedName>
        <fullName>Uncharacterized protein HI_0094</fullName>
    </recommendedName>
</protein>
<accession>P43939</accession>
<feature type="chain" id="PRO_0000077885" description="Uncharacterized protein HI_0094">
    <location>
        <begin position="1"/>
        <end position="106"/>
    </location>
</feature>
<feature type="transmembrane region" description="Helical" evidence="1">
    <location>
        <begin position="78"/>
        <end position="98"/>
    </location>
</feature>
<reference key="1">
    <citation type="journal article" date="1995" name="Science">
        <title>Whole-genome random sequencing and assembly of Haemophilus influenzae Rd.</title>
        <authorList>
            <person name="Fleischmann R.D."/>
            <person name="Adams M.D."/>
            <person name="White O."/>
            <person name="Clayton R.A."/>
            <person name="Kirkness E.F."/>
            <person name="Kerlavage A.R."/>
            <person name="Bult C.J."/>
            <person name="Tomb J.-F."/>
            <person name="Dougherty B.A."/>
            <person name="Merrick J.M."/>
            <person name="McKenney K."/>
            <person name="Sutton G.G."/>
            <person name="FitzHugh W."/>
            <person name="Fields C.A."/>
            <person name="Gocayne J.D."/>
            <person name="Scott J.D."/>
            <person name="Shirley R."/>
            <person name="Liu L.-I."/>
            <person name="Glodek A."/>
            <person name="Kelley J.M."/>
            <person name="Weidman J.F."/>
            <person name="Phillips C.A."/>
            <person name="Spriggs T."/>
            <person name="Hedblom E."/>
            <person name="Cotton M.D."/>
            <person name="Utterback T.R."/>
            <person name="Hanna M.C."/>
            <person name="Nguyen D.T."/>
            <person name="Saudek D.M."/>
            <person name="Brandon R.C."/>
            <person name="Fine L.D."/>
            <person name="Fritchman J.L."/>
            <person name="Fuhrmann J.L."/>
            <person name="Geoghagen N.S.M."/>
            <person name="Gnehm C.L."/>
            <person name="McDonald L.A."/>
            <person name="Small K.V."/>
            <person name="Fraser C.M."/>
            <person name="Smith H.O."/>
            <person name="Venter J.C."/>
        </authorList>
    </citation>
    <scope>NUCLEOTIDE SEQUENCE [LARGE SCALE GENOMIC DNA]</scope>
    <source>
        <strain>ATCC 51907 / DSM 11121 / KW20 / Rd</strain>
    </source>
</reference>
<gene>
    <name type="ordered locus">HI_0094</name>
</gene>
<name>Y094_HAEIN</name>
<dbReference type="EMBL" id="L42023">
    <property type="protein sequence ID" value="AAC21779.1"/>
    <property type="molecule type" value="Genomic_DNA"/>
</dbReference>
<dbReference type="PIR" id="B64001">
    <property type="entry name" value="B64001"/>
</dbReference>
<dbReference type="RefSeq" id="NP_438268.2">
    <property type="nucleotide sequence ID" value="NC_000907.1"/>
</dbReference>
<dbReference type="SMR" id="P43939"/>
<dbReference type="STRING" id="71421.HI_0094"/>
<dbReference type="EnsemblBacteria" id="AAC21779">
    <property type="protein sequence ID" value="AAC21779"/>
    <property type="gene ID" value="HI_0094"/>
</dbReference>
<dbReference type="KEGG" id="hin:HI_0094"/>
<dbReference type="PATRIC" id="fig|71421.8.peg.95"/>
<dbReference type="eggNOG" id="COG0451">
    <property type="taxonomic scope" value="Bacteria"/>
</dbReference>
<dbReference type="eggNOG" id="COG2610">
    <property type="taxonomic scope" value="Bacteria"/>
</dbReference>
<dbReference type="HOGENOM" id="CLU_2219417_0_0_6"/>
<dbReference type="OrthoDB" id="9801056at2"/>
<dbReference type="PhylomeDB" id="P43939"/>
<dbReference type="BioCyc" id="HINF71421:G1GJ1-99-MONOMER"/>
<dbReference type="Proteomes" id="UP000000579">
    <property type="component" value="Chromosome"/>
</dbReference>
<dbReference type="GO" id="GO:0016020">
    <property type="term" value="C:membrane"/>
    <property type="evidence" value="ECO:0007669"/>
    <property type="project" value="UniProtKB-SubCell"/>
</dbReference>
<dbReference type="GO" id="GO:0015128">
    <property type="term" value="F:gluconate transmembrane transporter activity"/>
    <property type="evidence" value="ECO:0007669"/>
    <property type="project" value="InterPro"/>
</dbReference>
<dbReference type="Gene3D" id="3.40.50.720">
    <property type="entry name" value="NAD(P)-binding Rossmann-like Domain"/>
    <property type="match status" value="1"/>
</dbReference>
<dbReference type="InterPro" id="IPR003474">
    <property type="entry name" value="Glcn_transporter"/>
</dbReference>
<dbReference type="PANTHER" id="PTHR43103:SF3">
    <property type="entry name" value="ADP-L-GLYCERO-D-MANNO-HEPTOSE-6-EPIMERASE"/>
    <property type="match status" value="1"/>
</dbReference>
<dbReference type="PANTHER" id="PTHR43103">
    <property type="entry name" value="NUCLEOSIDE-DIPHOSPHATE-SUGAR EPIMERASE"/>
    <property type="match status" value="1"/>
</dbReference>
<dbReference type="Pfam" id="PF02447">
    <property type="entry name" value="GntP_permease"/>
    <property type="match status" value="1"/>
</dbReference>
<sequence>MSELLINDYTRKGFVDGLCLRLPTICIRPGKPNKATSSFVSSIIREPLHGETSICPVAEKMAFSFIKFLGKKKEEWALAITGYVVSIPIVLPILIIFIKAILDLGK</sequence>
<keyword id="KW-0472">Membrane</keyword>
<keyword id="KW-1185">Reference proteome</keyword>
<keyword id="KW-0812">Transmembrane</keyword>
<keyword id="KW-1133">Transmembrane helix</keyword>
<organism>
    <name type="scientific">Haemophilus influenzae (strain ATCC 51907 / DSM 11121 / KW20 / Rd)</name>
    <dbReference type="NCBI Taxonomy" id="71421"/>
    <lineage>
        <taxon>Bacteria</taxon>
        <taxon>Pseudomonadati</taxon>
        <taxon>Pseudomonadota</taxon>
        <taxon>Gammaproteobacteria</taxon>
        <taxon>Pasteurellales</taxon>
        <taxon>Pasteurellaceae</taxon>
        <taxon>Haemophilus</taxon>
    </lineage>
</organism>
<evidence type="ECO:0000255" key="1"/>
<evidence type="ECO:0000305" key="2"/>
<proteinExistence type="predicted"/>